<organism>
    <name type="scientific">Christiangramia forsetii (strain DSM 17595 / CGMCC 1.15422 / KT0803)</name>
    <name type="common">Gramella forsetii</name>
    <dbReference type="NCBI Taxonomy" id="411154"/>
    <lineage>
        <taxon>Bacteria</taxon>
        <taxon>Pseudomonadati</taxon>
        <taxon>Bacteroidota</taxon>
        <taxon>Flavobacteriia</taxon>
        <taxon>Flavobacteriales</taxon>
        <taxon>Flavobacteriaceae</taxon>
        <taxon>Christiangramia</taxon>
    </lineage>
</organism>
<comment type="function">
    <text evidence="1">Binds directly to 16S ribosomal RNA.</text>
</comment>
<comment type="similarity">
    <text evidence="1">Belongs to the bacterial ribosomal protein bS20 family.</text>
</comment>
<evidence type="ECO:0000255" key="1">
    <source>
        <dbReference type="HAMAP-Rule" id="MF_00500"/>
    </source>
</evidence>
<evidence type="ECO:0000256" key="2">
    <source>
        <dbReference type="SAM" id="MobiDB-lite"/>
    </source>
</evidence>
<evidence type="ECO:0000305" key="3"/>
<dbReference type="EMBL" id="CU207366">
    <property type="protein sequence ID" value="CAL67687.1"/>
    <property type="molecule type" value="Genomic_DNA"/>
</dbReference>
<dbReference type="RefSeq" id="WP_011710590.1">
    <property type="nucleotide sequence ID" value="NC_008571.1"/>
</dbReference>
<dbReference type="SMR" id="A0M4Z2"/>
<dbReference type="STRING" id="411154.GFO_2731"/>
<dbReference type="KEGG" id="gfo:GFO_2731"/>
<dbReference type="eggNOG" id="COG0268">
    <property type="taxonomic scope" value="Bacteria"/>
</dbReference>
<dbReference type="HOGENOM" id="CLU_160655_3_2_10"/>
<dbReference type="OrthoDB" id="9808392at2"/>
<dbReference type="Proteomes" id="UP000000755">
    <property type="component" value="Chromosome"/>
</dbReference>
<dbReference type="GO" id="GO:0005829">
    <property type="term" value="C:cytosol"/>
    <property type="evidence" value="ECO:0007669"/>
    <property type="project" value="TreeGrafter"/>
</dbReference>
<dbReference type="GO" id="GO:0015935">
    <property type="term" value="C:small ribosomal subunit"/>
    <property type="evidence" value="ECO:0007669"/>
    <property type="project" value="TreeGrafter"/>
</dbReference>
<dbReference type="GO" id="GO:0070181">
    <property type="term" value="F:small ribosomal subunit rRNA binding"/>
    <property type="evidence" value="ECO:0007669"/>
    <property type="project" value="TreeGrafter"/>
</dbReference>
<dbReference type="GO" id="GO:0003735">
    <property type="term" value="F:structural constituent of ribosome"/>
    <property type="evidence" value="ECO:0007669"/>
    <property type="project" value="InterPro"/>
</dbReference>
<dbReference type="GO" id="GO:0006412">
    <property type="term" value="P:translation"/>
    <property type="evidence" value="ECO:0007669"/>
    <property type="project" value="UniProtKB-UniRule"/>
</dbReference>
<dbReference type="Gene3D" id="1.20.58.110">
    <property type="entry name" value="Ribosomal protein S20"/>
    <property type="match status" value="1"/>
</dbReference>
<dbReference type="HAMAP" id="MF_00500">
    <property type="entry name" value="Ribosomal_bS20"/>
    <property type="match status" value="1"/>
</dbReference>
<dbReference type="InterPro" id="IPR002583">
    <property type="entry name" value="Ribosomal_bS20"/>
</dbReference>
<dbReference type="InterPro" id="IPR036510">
    <property type="entry name" value="Ribosomal_bS20_sf"/>
</dbReference>
<dbReference type="NCBIfam" id="TIGR00029">
    <property type="entry name" value="S20"/>
    <property type="match status" value="1"/>
</dbReference>
<dbReference type="PANTHER" id="PTHR33398">
    <property type="entry name" value="30S RIBOSOMAL PROTEIN S20"/>
    <property type="match status" value="1"/>
</dbReference>
<dbReference type="PANTHER" id="PTHR33398:SF1">
    <property type="entry name" value="SMALL RIBOSOMAL SUBUNIT PROTEIN BS20C"/>
    <property type="match status" value="1"/>
</dbReference>
<dbReference type="Pfam" id="PF01649">
    <property type="entry name" value="Ribosomal_S20p"/>
    <property type="match status" value="1"/>
</dbReference>
<dbReference type="SUPFAM" id="SSF46992">
    <property type="entry name" value="Ribosomal protein S20"/>
    <property type="match status" value="1"/>
</dbReference>
<accession>A0M4Z2</accession>
<keyword id="KW-0687">Ribonucleoprotein</keyword>
<keyword id="KW-0689">Ribosomal protein</keyword>
<keyword id="KW-0694">RNA-binding</keyword>
<keyword id="KW-0699">rRNA-binding</keyword>
<name>RS20_CHRFK</name>
<gene>
    <name evidence="1" type="primary">rpsT</name>
    <name type="ordered locus">GFO_2731</name>
</gene>
<reference key="1">
    <citation type="journal article" date="2006" name="Environ. Microbiol.">
        <title>Whole genome analysis of the marine Bacteroidetes'Gramella forsetii' reveals adaptations to degradation of polymeric organic matter.</title>
        <authorList>
            <person name="Bauer M."/>
            <person name="Kube M."/>
            <person name="Teeling H."/>
            <person name="Richter M."/>
            <person name="Lombardot T."/>
            <person name="Allers E."/>
            <person name="Wuerdemann C.A."/>
            <person name="Quast C."/>
            <person name="Kuhl H."/>
            <person name="Knaust F."/>
            <person name="Woebken D."/>
            <person name="Bischof K."/>
            <person name="Mussmann M."/>
            <person name="Choudhuri J.V."/>
            <person name="Meyer F."/>
            <person name="Reinhardt R."/>
            <person name="Amann R.I."/>
            <person name="Gloeckner F.O."/>
        </authorList>
    </citation>
    <scope>NUCLEOTIDE SEQUENCE [LARGE SCALE GENOMIC DNA]</scope>
    <source>
        <strain>DSM 17595 / CGMCC 1.15422 / KT0803</strain>
    </source>
</reference>
<sequence>MANHKSALKRIRSNETKRLRNRYQHKTTRNAIKKLRDADKKEAEGMLPSVISMVDKLAKKNIIHDNKAANLKSQLTKHVAAL</sequence>
<protein>
    <recommendedName>
        <fullName evidence="1">Small ribosomal subunit protein bS20</fullName>
    </recommendedName>
    <alternativeName>
        <fullName evidence="3">30S ribosomal protein S20</fullName>
    </alternativeName>
</protein>
<feature type="chain" id="PRO_1000014588" description="Small ribosomal subunit protein bS20">
    <location>
        <begin position="1"/>
        <end position="82"/>
    </location>
</feature>
<feature type="region of interest" description="Disordered" evidence="2">
    <location>
        <begin position="1"/>
        <end position="20"/>
    </location>
</feature>
<feature type="compositionally biased region" description="Basic residues" evidence="2">
    <location>
        <begin position="1"/>
        <end position="11"/>
    </location>
</feature>
<proteinExistence type="inferred from homology"/>